<reference key="1">
    <citation type="submission" date="2005-08" db="EMBL/GenBank/DDBJ databases">
        <title>Complete sequence of chromosome 1 of Synechococcus elongatus PCC 7942.</title>
        <authorList>
            <consortium name="US DOE Joint Genome Institute"/>
            <person name="Copeland A."/>
            <person name="Lucas S."/>
            <person name="Lapidus A."/>
            <person name="Barry K."/>
            <person name="Detter J.C."/>
            <person name="Glavina T."/>
            <person name="Hammon N."/>
            <person name="Israni S."/>
            <person name="Pitluck S."/>
            <person name="Schmutz J."/>
            <person name="Larimer F."/>
            <person name="Land M."/>
            <person name="Kyrpides N."/>
            <person name="Lykidis A."/>
            <person name="Golden S."/>
            <person name="Richardson P."/>
        </authorList>
    </citation>
    <scope>NUCLEOTIDE SEQUENCE [LARGE SCALE GENOMIC DNA]</scope>
    <source>
        <strain>ATCC 33912 / PCC 7942 / FACHB-805</strain>
    </source>
</reference>
<accession>Q31L20</accession>
<sequence>MAVNDPIADMLTRIRNASEARHATTVVPASRLARSIAEVLKREGFIADFEESGEGVQRHLVLSLKYKGKNQQPIIKALKRVSKPGLRVYSNRRDLPRVLGGIGIAIISTSQGIMTDRDARRQGVGGEVLCYVW</sequence>
<feature type="chain" id="PRO_0000290953" description="Small ribosomal subunit protein uS8">
    <location>
        <begin position="1"/>
        <end position="133"/>
    </location>
</feature>
<name>RS8_SYNE7</name>
<evidence type="ECO:0000255" key="1">
    <source>
        <dbReference type="HAMAP-Rule" id="MF_01302"/>
    </source>
</evidence>
<evidence type="ECO:0000305" key="2"/>
<comment type="function">
    <text evidence="1">One of the primary rRNA binding proteins, it binds directly to 16S rRNA central domain where it helps coordinate assembly of the platform of the 30S subunit.</text>
</comment>
<comment type="subunit">
    <text evidence="1">Part of the 30S ribosomal subunit. Contacts proteins S5 and S12.</text>
</comment>
<comment type="similarity">
    <text evidence="1">Belongs to the universal ribosomal protein uS8 family.</text>
</comment>
<protein>
    <recommendedName>
        <fullName evidence="1">Small ribosomal subunit protein uS8</fullName>
    </recommendedName>
    <alternativeName>
        <fullName evidence="2">30S ribosomal protein S8</fullName>
    </alternativeName>
</protein>
<proteinExistence type="inferred from homology"/>
<organism>
    <name type="scientific">Synechococcus elongatus (strain ATCC 33912 / PCC 7942 / FACHB-805)</name>
    <name type="common">Anacystis nidulans R2</name>
    <dbReference type="NCBI Taxonomy" id="1140"/>
    <lineage>
        <taxon>Bacteria</taxon>
        <taxon>Bacillati</taxon>
        <taxon>Cyanobacteriota</taxon>
        <taxon>Cyanophyceae</taxon>
        <taxon>Synechococcales</taxon>
        <taxon>Synechococcaceae</taxon>
        <taxon>Synechococcus</taxon>
    </lineage>
</organism>
<keyword id="KW-1185">Reference proteome</keyword>
<keyword id="KW-0687">Ribonucleoprotein</keyword>
<keyword id="KW-0689">Ribosomal protein</keyword>
<keyword id="KW-0694">RNA-binding</keyword>
<keyword id="KW-0699">rRNA-binding</keyword>
<dbReference type="EMBL" id="CP000100">
    <property type="protein sequence ID" value="ABB58249.1"/>
    <property type="molecule type" value="Genomic_DNA"/>
</dbReference>
<dbReference type="RefSeq" id="WP_011244188.1">
    <property type="nucleotide sequence ID" value="NZ_JACJTX010000001.1"/>
</dbReference>
<dbReference type="SMR" id="Q31L20"/>
<dbReference type="STRING" id="1140.Synpcc7942_2219"/>
<dbReference type="PaxDb" id="1140-Synpcc7942_2219"/>
<dbReference type="GeneID" id="72431102"/>
<dbReference type="KEGG" id="syf:Synpcc7942_2219"/>
<dbReference type="eggNOG" id="COG0096">
    <property type="taxonomic scope" value="Bacteria"/>
</dbReference>
<dbReference type="HOGENOM" id="CLU_098428_0_2_3"/>
<dbReference type="OrthoDB" id="9802617at2"/>
<dbReference type="BioCyc" id="SYNEL:SYNPCC7942_2219-MONOMER"/>
<dbReference type="Proteomes" id="UP000889800">
    <property type="component" value="Chromosome"/>
</dbReference>
<dbReference type="GO" id="GO:1990904">
    <property type="term" value="C:ribonucleoprotein complex"/>
    <property type="evidence" value="ECO:0007669"/>
    <property type="project" value="UniProtKB-KW"/>
</dbReference>
<dbReference type="GO" id="GO:0005840">
    <property type="term" value="C:ribosome"/>
    <property type="evidence" value="ECO:0007669"/>
    <property type="project" value="UniProtKB-KW"/>
</dbReference>
<dbReference type="GO" id="GO:0019843">
    <property type="term" value="F:rRNA binding"/>
    <property type="evidence" value="ECO:0007669"/>
    <property type="project" value="UniProtKB-UniRule"/>
</dbReference>
<dbReference type="GO" id="GO:0003735">
    <property type="term" value="F:structural constituent of ribosome"/>
    <property type="evidence" value="ECO:0007669"/>
    <property type="project" value="InterPro"/>
</dbReference>
<dbReference type="GO" id="GO:0006412">
    <property type="term" value="P:translation"/>
    <property type="evidence" value="ECO:0007669"/>
    <property type="project" value="UniProtKB-UniRule"/>
</dbReference>
<dbReference type="FunFam" id="3.30.1370.30:FF:000002">
    <property type="entry name" value="30S ribosomal protein S8"/>
    <property type="match status" value="1"/>
</dbReference>
<dbReference type="FunFam" id="3.30.1490.10:FF:000001">
    <property type="entry name" value="30S ribosomal protein S8"/>
    <property type="match status" value="1"/>
</dbReference>
<dbReference type="Gene3D" id="3.30.1370.30">
    <property type="match status" value="1"/>
</dbReference>
<dbReference type="Gene3D" id="3.30.1490.10">
    <property type="match status" value="1"/>
</dbReference>
<dbReference type="HAMAP" id="MF_01302_B">
    <property type="entry name" value="Ribosomal_uS8_B"/>
    <property type="match status" value="1"/>
</dbReference>
<dbReference type="InterPro" id="IPR000630">
    <property type="entry name" value="Ribosomal_uS8"/>
</dbReference>
<dbReference type="InterPro" id="IPR047863">
    <property type="entry name" value="Ribosomal_uS8_CS"/>
</dbReference>
<dbReference type="InterPro" id="IPR035987">
    <property type="entry name" value="Ribosomal_uS8_sf"/>
</dbReference>
<dbReference type="NCBIfam" id="NF001109">
    <property type="entry name" value="PRK00136.1"/>
    <property type="match status" value="1"/>
</dbReference>
<dbReference type="PANTHER" id="PTHR11758">
    <property type="entry name" value="40S RIBOSOMAL PROTEIN S15A"/>
    <property type="match status" value="1"/>
</dbReference>
<dbReference type="Pfam" id="PF00410">
    <property type="entry name" value="Ribosomal_S8"/>
    <property type="match status" value="1"/>
</dbReference>
<dbReference type="SUPFAM" id="SSF56047">
    <property type="entry name" value="Ribosomal protein S8"/>
    <property type="match status" value="1"/>
</dbReference>
<dbReference type="PROSITE" id="PS00053">
    <property type="entry name" value="RIBOSOMAL_S8"/>
    <property type="match status" value="1"/>
</dbReference>
<gene>
    <name evidence="1" type="primary">rpsH</name>
    <name evidence="1" type="synonym">rps8</name>
    <name type="ordered locus">Synpcc7942_2219</name>
</gene>